<feature type="signal peptide" evidence="1">
    <location>
        <begin position="1"/>
        <end position="27"/>
    </location>
</feature>
<feature type="chain" id="PRO_0000300245" description="Glycine-rich cell wall structural protein 2">
    <location>
        <begin position="28"/>
        <end position="185"/>
    </location>
</feature>
<feature type="region of interest" description="Disordered" evidence="2">
    <location>
        <begin position="149"/>
        <end position="185"/>
    </location>
</feature>
<feature type="sequence conflict" description="In Ref. 1; CAA38315." evidence="4" ref="1">
    <location>
        <begin position="39"/>
        <end position="40"/>
    </location>
</feature>
<feature type="sequence conflict" description="In Ref. 1; CAA38315." evidence="4" ref="1">
    <original>S</original>
    <variation>Y</variation>
    <location>
        <position position="168"/>
    </location>
</feature>
<feature type="sequence conflict" description="In Ref. 1; CAA38315." evidence="4" ref="1">
    <original>S</original>
    <variation>Y</variation>
    <location>
        <position position="178"/>
    </location>
</feature>
<evidence type="ECO:0000255" key="1"/>
<evidence type="ECO:0000256" key="2">
    <source>
        <dbReference type="SAM" id="MobiDB-lite"/>
    </source>
</evidence>
<evidence type="ECO:0000269" key="3">
    <source>
    </source>
</evidence>
<evidence type="ECO:0000305" key="4"/>
<accession>P0C5C7</accession>
<accession>P29834</accession>
<accession>Q0IXC2</accession>
<accession>Q109L9</accession>
<accession>Q337Q1</accession>
<accession>Q7XDV1</accession>
<dbReference type="EMBL" id="X54449">
    <property type="protein sequence ID" value="CAA38315.1"/>
    <property type="molecule type" value="mRNA"/>
</dbReference>
<dbReference type="EMBL" id="U40708">
    <property type="protein sequence ID" value="AAA85863.1"/>
    <property type="molecule type" value="Genomic_DNA"/>
</dbReference>
<dbReference type="PIR" id="S18567">
    <property type="entry name" value="KNRZG2"/>
</dbReference>
<dbReference type="GO" id="GO:0005576">
    <property type="term" value="C:extracellular region"/>
    <property type="evidence" value="ECO:0007669"/>
    <property type="project" value="UniProtKB-KW"/>
</dbReference>
<dbReference type="GO" id="GO:0071555">
    <property type="term" value="P:cell wall organization"/>
    <property type="evidence" value="ECO:0007669"/>
    <property type="project" value="UniProtKB-KW"/>
</dbReference>
<dbReference type="InterPro" id="IPR040417">
    <property type="entry name" value="GRP1/2"/>
</dbReference>
<dbReference type="PANTHER" id="PTHR33548">
    <property type="entry name" value="GLYCINE-RICH CELL WALL STRUCTURAL PROTEIN 2"/>
    <property type="match status" value="1"/>
</dbReference>
<dbReference type="PRINTS" id="PR01228">
    <property type="entry name" value="EGGSHELL"/>
</dbReference>
<proteinExistence type="evidence at transcript level"/>
<keyword id="KW-0134">Cell wall</keyword>
<keyword id="KW-0961">Cell wall biogenesis/degradation</keyword>
<keyword id="KW-0677">Repeat</keyword>
<keyword id="KW-0964">Secreted</keyword>
<keyword id="KW-0732">Signal</keyword>
<protein>
    <recommendedName>
        <fullName>Glycine-rich cell wall structural protein 2</fullName>
    </recommendedName>
    <alternativeName>
        <fullName>Glycine-rich protein 1</fullName>
        <shortName>GRP-1</shortName>
    </alternativeName>
</protein>
<organism>
    <name type="scientific">Oryza sativa subsp. indica</name>
    <name type="common">Rice</name>
    <dbReference type="NCBI Taxonomy" id="39946"/>
    <lineage>
        <taxon>Eukaryota</taxon>
        <taxon>Viridiplantae</taxon>
        <taxon>Streptophyta</taxon>
        <taxon>Embryophyta</taxon>
        <taxon>Tracheophyta</taxon>
        <taxon>Spermatophyta</taxon>
        <taxon>Magnoliopsida</taxon>
        <taxon>Liliopsida</taxon>
        <taxon>Poales</taxon>
        <taxon>Poaceae</taxon>
        <taxon>BOP clade</taxon>
        <taxon>Oryzoideae</taxon>
        <taxon>Oryzeae</taxon>
        <taxon>Oryzinae</taxon>
        <taxon>Oryza</taxon>
        <taxon>Oryza sativa</taxon>
    </lineage>
</organism>
<sequence>MATTKHLALAILVLLSIGMTTSARTLLGYGPGGGGGGGGGGEGGGGGYGGSGYGSGSGYGEGGGSGGAAGGGYGRGGGGGGGGGEGGGSGSGYGSGQGSGYGAGVGGAGGYGSGGGGGGGQGGGAGGYGQGSGYGSGYGSGAGGAHGGGYGSGGGGGGGGGQGGGSGSGSGSGYGSGSGGGNGHH</sequence>
<gene>
    <name type="primary">GRP0.9</name>
    <name type="synonym">GRP1</name>
</gene>
<comment type="function">
    <text evidence="4">Responsible for plasticity of the cell wall.</text>
</comment>
<comment type="subcellular location">
    <subcellularLocation>
        <location evidence="4">Secreted</location>
        <location evidence="4">Cell wall</location>
    </subcellularLocation>
</comment>
<comment type="induction">
    <text evidence="3">By infection with rice yellow stunt virus.</text>
</comment>
<name>GRP2_ORYSI</name>
<reference key="1">
    <citation type="journal article" date="1991" name="Plant Mol. Biol.">
        <title>cDNA sequence of a virus-inducible, glycine-rich protein gene from rice.</title>
        <authorList>
            <person name="Fang R.-X."/>
            <person name="Pang Z."/>
            <person name="Gao D.M."/>
            <person name="Mang K.Q."/>
            <person name="Chua N.H."/>
        </authorList>
    </citation>
    <scope>NUCLEOTIDE SEQUENCE [MRNA]</scope>
    <scope>INDUCTION</scope>
    <source>
        <strain>cv. Aijiao Nante</strain>
        <tissue>Leaf</tissue>
    </source>
</reference>
<reference key="2">
    <citation type="submission" date="1995-11" db="EMBL/GenBank/DDBJ databases">
        <authorList>
            <person name="Fang R.-X."/>
            <person name="Wang J.L."/>
        </authorList>
    </citation>
    <scope>NUCLEOTIDE SEQUENCE [GENOMIC DNA]</scope>
    <source>
        <strain>cv. Aijiao Nante</strain>
    </source>
</reference>